<gene>
    <name evidence="1" type="primary">lptD</name>
    <name type="synonym">imp</name>
    <name type="synonym">ostA</name>
    <name type="ordered locus">SSON_0062</name>
</gene>
<sequence>MKKRIPTLLATMIATALYSQQGLAADLASQCMLGVPSYDRPLVQGDTNDLPVTINADHAKGDYPDDAVFTGSVDIMQGNSRLQADEVQLHQKEAPGQPEPVRTVDALGNVHYDDNQVILKGPKGWANLNTKDTNVWEGDYQMVGRQGRGKADLMKQRGENRYTILDNGSFTSCLPGSDTWSVVGSEIIHDREEQVAEIWNARFKVGPVPIFYSPYLQLPVGDKRRSGFLIPNAKYTTTNYFEFYLPYYWNIAPNMDATITPHYMHRRGNIMWENEFRYLSQAGAGLMELDYLPSDKVYEDEHPNDDSSRRWLFYWQHSGVMDQVWRFNVDYTKVSDPSYFNDFDNKYGSSTDGYATQKFSVGYAVQNFNATVSTKQFQVFSEQNTSSYSAEPQLDVNYYQNDVGPFDTRIYGQAVHFVNTRDDMPEATRVHLEPTINLPLSNNWGSINTEAKLLATHYQQTNLDWYNSRNTTKLDESVNRVMPQFKVDGKMVFERDMEMLAPGYTQTLEPRAQYLYVPYRDQSDIYNYDSSLLQSDYSGLFRDRTYGGLDRIASANQVTTGVTSRIYDDAAVERFNISVGQIYYFTESRTGDDNITWENDDKTGSLVWAGDTYWRISERWGLRGGIQYDTRLDNVATSNSSIEYRRDEDRLVQLNYRYASPEYIQATLPKYYSTAEQYKNGISQVGAVASWPIADRWSIVGAYYYDTNANKQADSMLGVQYSSCCYAIRVGYERKLNGWDNDKQHAVYDNAIGFNIELRGLSSNYGLGTQEMLRSNILPYQNTL</sequence>
<name>LPTD_SHISS</name>
<proteinExistence type="inferred from homology"/>
<reference key="1">
    <citation type="journal article" date="2005" name="Nucleic Acids Res.">
        <title>Genome dynamics and diversity of Shigella species, the etiologic agents of bacillary dysentery.</title>
        <authorList>
            <person name="Yang F."/>
            <person name="Yang J."/>
            <person name="Zhang X."/>
            <person name="Chen L."/>
            <person name="Jiang Y."/>
            <person name="Yan Y."/>
            <person name="Tang X."/>
            <person name="Wang J."/>
            <person name="Xiong Z."/>
            <person name="Dong J."/>
            <person name="Xue Y."/>
            <person name="Zhu Y."/>
            <person name="Xu X."/>
            <person name="Sun L."/>
            <person name="Chen S."/>
            <person name="Nie H."/>
            <person name="Peng J."/>
            <person name="Xu J."/>
            <person name="Wang Y."/>
            <person name="Yuan Z."/>
            <person name="Wen Y."/>
            <person name="Yao Z."/>
            <person name="Shen Y."/>
            <person name="Qiang B."/>
            <person name="Hou Y."/>
            <person name="Yu J."/>
            <person name="Jin Q."/>
        </authorList>
    </citation>
    <scope>NUCLEOTIDE SEQUENCE [LARGE SCALE GENOMIC DNA]</scope>
    <source>
        <strain>Ss046</strain>
    </source>
</reference>
<protein>
    <recommendedName>
        <fullName evidence="1">LPS-assembly protein LptD</fullName>
    </recommendedName>
</protein>
<accession>Q3Z5V5</accession>
<keyword id="KW-0998">Cell outer membrane</keyword>
<keyword id="KW-1015">Disulfide bond</keyword>
<keyword id="KW-0472">Membrane</keyword>
<keyword id="KW-1185">Reference proteome</keyword>
<keyword id="KW-0732">Signal</keyword>
<comment type="function">
    <text evidence="1">Together with LptE, is involved in the assembly of lipopolysaccharide (LPS) at the surface of the outer membrane.</text>
</comment>
<comment type="subunit">
    <text evidence="1">Component of the lipopolysaccharide transport and assembly complex. Interacts with LptE and LptA.</text>
</comment>
<comment type="subcellular location">
    <subcellularLocation>
        <location evidence="1">Cell outer membrane</location>
    </subcellularLocation>
</comment>
<comment type="PTM">
    <text evidence="1">Contains two intramolecular disulfide bonds.</text>
</comment>
<comment type="similarity">
    <text evidence="1">Belongs to the LptD family.</text>
</comment>
<organism>
    <name type="scientific">Shigella sonnei (strain Ss046)</name>
    <dbReference type="NCBI Taxonomy" id="300269"/>
    <lineage>
        <taxon>Bacteria</taxon>
        <taxon>Pseudomonadati</taxon>
        <taxon>Pseudomonadota</taxon>
        <taxon>Gammaproteobacteria</taxon>
        <taxon>Enterobacterales</taxon>
        <taxon>Enterobacteriaceae</taxon>
        <taxon>Shigella</taxon>
    </lineage>
</organism>
<evidence type="ECO:0000255" key="1">
    <source>
        <dbReference type="HAMAP-Rule" id="MF_01411"/>
    </source>
</evidence>
<feature type="signal peptide" evidence="1">
    <location>
        <begin position="1"/>
        <end position="24"/>
    </location>
</feature>
<feature type="chain" id="PRO_0000281638" description="LPS-assembly protein LptD">
    <location>
        <begin position="25"/>
        <end position="784"/>
    </location>
</feature>
<feature type="disulfide bond" evidence="1">
    <location>
        <begin position="31"/>
        <end position="724"/>
    </location>
</feature>
<feature type="disulfide bond" evidence="1">
    <location>
        <begin position="173"/>
        <end position="725"/>
    </location>
</feature>
<dbReference type="EMBL" id="CP000038">
    <property type="protein sequence ID" value="AAZ86857.1"/>
    <property type="molecule type" value="Genomic_DNA"/>
</dbReference>
<dbReference type="RefSeq" id="WP_000746156.1">
    <property type="nucleotide sequence ID" value="NC_007384.1"/>
</dbReference>
<dbReference type="SMR" id="Q3Z5V5"/>
<dbReference type="GeneID" id="93777381"/>
<dbReference type="KEGG" id="ssn:SSON_0062"/>
<dbReference type="HOGENOM" id="CLU_009039_2_0_6"/>
<dbReference type="Proteomes" id="UP000002529">
    <property type="component" value="Chromosome"/>
</dbReference>
<dbReference type="GO" id="GO:0009279">
    <property type="term" value="C:cell outer membrane"/>
    <property type="evidence" value="ECO:0007669"/>
    <property type="project" value="UniProtKB-SubCell"/>
</dbReference>
<dbReference type="GO" id="GO:1990351">
    <property type="term" value="C:transporter complex"/>
    <property type="evidence" value="ECO:0007669"/>
    <property type="project" value="TreeGrafter"/>
</dbReference>
<dbReference type="GO" id="GO:0043165">
    <property type="term" value="P:Gram-negative-bacterium-type cell outer membrane assembly"/>
    <property type="evidence" value="ECO:0007669"/>
    <property type="project" value="UniProtKB-UniRule"/>
</dbReference>
<dbReference type="GO" id="GO:0015920">
    <property type="term" value="P:lipopolysaccharide transport"/>
    <property type="evidence" value="ECO:0007669"/>
    <property type="project" value="InterPro"/>
</dbReference>
<dbReference type="FunFam" id="2.60.450.10:FF:000003">
    <property type="entry name" value="LPS-assembly protein LptD"/>
    <property type="match status" value="1"/>
</dbReference>
<dbReference type="Gene3D" id="2.60.450.10">
    <property type="entry name" value="Lipopolysaccharide (LPS) transport protein A like domain"/>
    <property type="match status" value="1"/>
</dbReference>
<dbReference type="HAMAP" id="MF_01411">
    <property type="entry name" value="LPS_assembly_LptD"/>
    <property type="match status" value="1"/>
</dbReference>
<dbReference type="InterPro" id="IPR020889">
    <property type="entry name" value="LipoPS_assembly_LptD"/>
</dbReference>
<dbReference type="InterPro" id="IPR050218">
    <property type="entry name" value="LptD"/>
</dbReference>
<dbReference type="InterPro" id="IPR007543">
    <property type="entry name" value="LptD_C"/>
</dbReference>
<dbReference type="InterPro" id="IPR005653">
    <property type="entry name" value="OstA-like_N"/>
</dbReference>
<dbReference type="NCBIfam" id="NF002997">
    <property type="entry name" value="PRK03761.1"/>
    <property type="match status" value="1"/>
</dbReference>
<dbReference type="PANTHER" id="PTHR30189">
    <property type="entry name" value="LPS-ASSEMBLY PROTEIN"/>
    <property type="match status" value="1"/>
</dbReference>
<dbReference type="PANTHER" id="PTHR30189:SF1">
    <property type="entry name" value="LPS-ASSEMBLY PROTEIN LPTD"/>
    <property type="match status" value="1"/>
</dbReference>
<dbReference type="Pfam" id="PF04453">
    <property type="entry name" value="LptD"/>
    <property type="match status" value="1"/>
</dbReference>
<dbReference type="Pfam" id="PF03968">
    <property type="entry name" value="LptD_N"/>
    <property type="match status" value="1"/>
</dbReference>